<gene>
    <name evidence="1" type="primary">glk</name>
    <name type="ordered locus">RSp1557</name>
    <name type="ORF">RS02113</name>
</gene>
<protein>
    <recommendedName>
        <fullName evidence="1">Glucokinase</fullName>
        <ecNumber evidence="1">2.7.1.2</ecNumber>
    </recommendedName>
    <alternativeName>
        <fullName evidence="1">Glucose kinase</fullName>
    </alternativeName>
</protein>
<organism>
    <name type="scientific">Ralstonia nicotianae (strain ATCC BAA-1114 / GMI1000)</name>
    <name type="common">Ralstonia solanacearum</name>
    <dbReference type="NCBI Taxonomy" id="267608"/>
    <lineage>
        <taxon>Bacteria</taxon>
        <taxon>Pseudomonadati</taxon>
        <taxon>Pseudomonadota</taxon>
        <taxon>Betaproteobacteria</taxon>
        <taxon>Burkholderiales</taxon>
        <taxon>Burkholderiaceae</taxon>
        <taxon>Ralstonia</taxon>
        <taxon>Ralstonia solanacearum species complex</taxon>
    </lineage>
</organism>
<dbReference type="EC" id="2.7.1.2" evidence="1"/>
<dbReference type="EMBL" id="AL646053">
    <property type="protein sequence ID" value="CAD18708.1"/>
    <property type="status" value="ALT_INIT"/>
    <property type="molecule type" value="Genomic_DNA"/>
</dbReference>
<dbReference type="SMR" id="P58617"/>
<dbReference type="STRING" id="267608.RSp1557"/>
<dbReference type="EnsemblBacteria" id="CAD18708">
    <property type="protein sequence ID" value="CAD18708"/>
    <property type="gene ID" value="RSp1557"/>
</dbReference>
<dbReference type="KEGG" id="rso:RSp1557"/>
<dbReference type="eggNOG" id="COG0837">
    <property type="taxonomic scope" value="Bacteria"/>
</dbReference>
<dbReference type="HOGENOM" id="CLU_042582_1_0_4"/>
<dbReference type="Proteomes" id="UP000001436">
    <property type="component" value="Plasmid megaplasmid Rsp"/>
</dbReference>
<dbReference type="GO" id="GO:0005829">
    <property type="term" value="C:cytosol"/>
    <property type="evidence" value="ECO:0007669"/>
    <property type="project" value="TreeGrafter"/>
</dbReference>
<dbReference type="GO" id="GO:0005524">
    <property type="term" value="F:ATP binding"/>
    <property type="evidence" value="ECO:0007669"/>
    <property type="project" value="UniProtKB-UniRule"/>
</dbReference>
<dbReference type="GO" id="GO:0005536">
    <property type="term" value="F:D-glucose binding"/>
    <property type="evidence" value="ECO:0007669"/>
    <property type="project" value="InterPro"/>
</dbReference>
<dbReference type="GO" id="GO:0004340">
    <property type="term" value="F:glucokinase activity"/>
    <property type="evidence" value="ECO:0007669"/>
    <property type="project" value="UniProtKB-UniRule"/>
</dbReference>
<dbReference type="GO" id="GO:0006096">
    <property type="term" value="P:glycolytic process"/>
    <property type="evidence" value="ECO:0007669"/>
    <property type="project" value="UniProtKB-UniRule"/>
</dbReference>
<dbReference type="CDD" id="cd24008">
    <property type="entry name" value="ASKHA_NBD_GLK"/>
    <property type="match status" value="1"/>
</dbReference>
<dbReference type="Gene3D" id="3.30.420.40">
    <property type="match status" value="1"/>
</dbReference>
<dbReference type="Gene3D" id="3.40.367.20">
    <property type="match status" value="1"/>
</dbReference>
<dbReference type="HAMAP" id="MF_00524">
    <property type="entry name" value="Glucokinase"/>
    <property type="match status" value="1"/>
</dbReference>
<dbReference type="InterPro" id="IPR043129">
    <property type="entry name" value="ATPase_NBD"/>
</dbReference>
<dbReference type="InterPro" id="IPR050201">
    <property type="entry name" value="Bacterial_glucokinase"/>
</dbReference>
<dbReference type="InterPro" id="IPR003836">
    <property type="entry name" value="Glucokinase"/>
</dbReference>
<dbReference type="NCBIfam" id="TIGR00749">
    <property type="entry name" value="glk"/>
    <property type="match status" value="1"/>
</dbReference>
<dbReference type="NCBIfam" id="NF001416">
    <property type="entry name" value="PRK00292.1-3"/>
    <property type="match status" value="1"/>
</dbReference>
<dbReference type="PANTHER" id="PTHR47690">
    <property type="entry name" value="GLUCOKINASE"/>
    <property type="match status" value="1"/>
</dbReference>
<dbReference type="PANTHER" id="PTHR47690:SF1">
    <property type="entry name" value="GLUCOKINASE"/>
    <property type="match status" value="1"/>
</dbReference>
<dbReference type="Pfam" id="PF02685">
    <property type="entry name" value="Glucokinase"/>
    <property type="match status" value="1"/>
</dbReference>
<dbReference type="SUPFAM" id="SSF53067">
    <property type="entry name" value="Actin-like ATPase domain"/>
    <property type="match status" value="1"/>
</dbReference>
<proteinExistence type="inferred from homology"/>
<feature type="chain" id="PRO_0000215134" description="Glucokinase">
    <location>
        <begin position="1"/>
        <end position="342"/>
    </location>
</feature>
<feature type="binding site" evidence="1">
    <location>
        <begin position="15"/>
        <end position="20"/>
    </location>
    <ligand>
        <name>ATP</name>
        <dbReference type="ChEBI" id="CHEBI:30616"/>
    </ligand>
</feature>
<name>GLK_RALN1</name>
<accession>P58617</accession>
<reference key="1">
    <citation type="journal article" date="2002" name="Nature">
        <title>Genome sequence of the plant pathogen Ralstonia solanacearum.</title>
        <authorList>
            <person name="Salanoubat M."/>
            <person name="Genin S."/>
            <person name="Artiguenave F."/>
            <person name="Gouzy J."/>
            <person name="Mangenot S."/>
            <person name="Arlat M."/>
            <person name="Billault A."/>
            <person name="Brottier P."/>
            <person name="Camus J.-C."/>
            <person name="Cattolico L."/>
            <person name="Chandler M."/>
            <person name="Choisne N."/>
            <person name="Claudel-Renard C."/>
            <person name="Cunnac S."/>
            <person name="Demange N."/>
            <person name="Gaspin C."/>
            <person name="Lavie M."/>
            <person name="Moisan A."/>
            <person name="Robert C."/>
            <person name="Saurin W."/>
            <person name="Schiex T."/>
            <person name="Siguier P."/>
            <person name="Thebault P."/>
            <person name="Whalen M."/>
            <person name="Wincker P."/>
            <person name="Levy M."/>
            <person name="Weissenbach J."/>
            <person name="Boucher C.A."/>
        </authorList>
    </citation>
    <scope>NUCLEOTIDE SEQUENCE [LARGE SCALE GENOMIC DNA]</scope>
    <source>
        <strain>ATCC BAA-1114 / GMI1000</strain>
    </source>
</reference>
<geneLocation type="plasmid">
    <name>megaplasmid Rsp</name>
</geneLocation>
<evidence type="ECO:0000255" key="1">
    <source>
        <dbReference type="HAMAP-Rule" id="MF_00524"/>
    </source>
</evidence>
<evidence type="ECO:0000305" key="2"/>
<sequence length="342" mass="35878">MGSMDDVTAYPRLVGDVGGTNARFALEMAPMRLAHIGVLAGDDYPSLEAAMRAYLAALPPEIAAAGVRHAAIGIANPVLGDQIRMTNRDWAFSTEAMRQSLGFDTFVVLNDFAALAHALPYLGADELEQVGGSTCVADAPRALLGPGTGLGVASLLPTQAGRFIAVAGEGGHVAFAPMNDEEVVIWRFARERFGHVSAERLISGMGLELIYEALGACFDLWQQGPAVRRAADITAIALGEMEDTAGDHARCRYAVDTFCAMLGTVAANLAVTLGARGGVYIGGGIVPRLGAAFANSPFRRRFEDKGRFSGYVAAMPVYVIHAPYPGLIGLCAAMDHAVASGH</sequence>
<comment type="catalytic activity">
    <reaction evidence="1">
        <text>D-glucose + ATP = D-glucose 6-phosphate + ADP + H(+)</text>
        <dbReference type="Rhea" id="RHEA:17825"/>
        <dbReference type="ChEBI" id="CHEBI:4167"/>
        <dbReference type="ChEBI" id="CHEBI:15378"/>
        <dbReference type="ChEBI" id="CHEBI:30616"/>
        <dbReference type="ChEBI" id="CHEBI:61548"/>
        <dbReference type="ChEBI" id="CHEBI:456216"/>
        <dbReference type="EC" id="2.7.1.2"/>
    </reaction>
</comment>
<comment type="subcellular location">
    <subcellularLocation>
        <location evidence="1">Cytoplasm</location>
    </subcellularLocation>
</comment>
<comment type="similarity">
    <text evidence="1">Belongs to the bacterial glucokinase family.</text>
</comment>
<comment type="sequence caution" evidence="2">
    <conflict type="erroneous initiation">
        <sequence resource="EMBL-CDS" id="CAD18708"/>
    </conflict>
</comment>
<keyword id="KW-0067">ATP-binding</keyword>
<keyword id="KW-0963">Cytoplasm</keyword>
<keyword id="KW-0324">Glycolysis</keyword>
<keyword id="KW-0418">Kinase</keyword>
<keyword id="KW-0547">Nucleotide-binding</keyword>
<keyword id="KW-0614">Plasmid</keyword>
<keyword id="KW-1185">Reference proteome</keyword>
<keyword id="KW-0808">Transferase</keyword>